<keyword id="KW-0002">3D-structure</keyword>
<keyword id="KW-0007">Acetylation</keyword>
<keyword id="KW-0539">Nucleus</keyword>
<keyword id="KW-1185">Reference proteome</keyword>
<proteinExistence type="evidence at protein level"/>
<accession>Q9CQ18</accession>
<accession>Q8R1N2</accession>
<reference key="1">
    <citation type="submission" date="2001-02" db="EMBL/GenBank/DDBJ databases">
        <title>Evidence that the T6 pseudogene upstream of human SRY is derived from the transcript of a novel autosomal gene, AYP1.</title>
        <authorList>
            <person name="Lim H.N."/>
            <person name="Oakenfull E.A."/>
            <person name="Hawkins J.R."/>
        </authorList>
    </citation>
    <scope>NUCLEOTIDE SEQUENCE [MRNA]</scope>
</reference>
<reference key="2">
    <citation type="journal article" date="2005" name="Science">
        <title>The transcriptional landscape of the mammalian genome.</title>
        <authorList>
            <person name="Carninci P."/>
            <person name="Kasukawa T."/>
            <person name="Katayama S."/>
            <person name="Gough J."/>
            <person name="Frith M.C."/>
            <person name="Maeda N."/>
            <person name="Oyama R."/>
            <person name="Ravasi T."/>
            <person name="Lenhard B."/>
            <person name="Wells C."/>
            <person name="Kodzius R."/>
            <person name="Shimokawa K."/>
            <person name="Bajic V.B."/>
            <person name="Brenner S.E."/>
            <person name="Batalov S."/>
            <person name="Forrest A.R."/>
            <person name="Zavolan M."/>
            <person name="Davis M.J."/>
            <person name="Wilming L.G."/>
            <person name="Aidinis V."/>
            <person name="Allen J.E."/>
            <person name="Ambesi-Impiombato A."/>
            <person name="Apweiler R."/>
            <person name="Aturaliya R.N."/>
            <person name="Bailey T.L."/>
            <person name="Bansal M."/>
            <person name="Baxter L."/>
            <person name="Beisel K.W."/>
            <person name="Bersano T."/>
            <person name="Bono H."/>
            <person name="Chalk A.M."/>
            <person name="Chiu K.P."/>
            <person name="Choudhary V."/>
            <person name="Christoffels A."/>
            <person name="Clutterbuck D.R."/>
            <person name="Crowe M.L."/>
            <person name="Dalla E."/>
            <person name="Dalrymple B.P."/>
            <person name="de Bono B."/>
            <person name="Della Gatta G."/>
            <person name="di Bernardo D."/>
            <person name="Down T."/>
            <person name="Engstrom P."/>
            <person name="Fagiolini M."/>
            <person name="Faulkner G."/>
            <person name="Fletcher C.F."/>
            <person name="Fukushima T."/>
            <person name="Furuno M."/>
            <person name="Futaki S."/>
            <person name="Gariboldi M."/>
            <person name="Georgii-Hemming P."/>
            <person name="Gingeras T.R."/>
            <person name="Gojobori T."/>
            <person name="Green R.E."/>
            <person name="Gustincich S."/>
            <person name="Harbers M."/>
            <person name="Hayashi Y."/>
            <person name="Hensch T.K."/>
            <person name="Hirokawa N."/>
            <person name="Hill D."/>
            <person name="Huminiecki L."/>
            <person name="Iacono M."/>
            <person name="Ikeo K."/>
            <person name="Iwama A."/>
            <person name="Ishikawa T."/>
            <person name="Jakt M."/>
            <person name="Kanapin A."/>
            <person name="Katoh M."/>
            <person name="Kawasawa Y."/>
            <person name="Kelso J."/>
            <person name="Kitamura H."/>
            <person name="Kitano H."/>
            <person name="Kollias G."/>
            <person name="Krishnan S.P."/>
            <person name="Kruger A."/>
            <person name="Kummerfeld S.K."/>
            <person name="Kurochkin I.V."/>
            <person name="Lareau L.F."/>
            <person name="Lazarevic D."/>
            <person name="Lipovich L."/>
            <person name="Liu J."/>
            <person name="Liuni S."/>
            <person name="McWilliam S."/>
            <person name="Madan Babu M."/>
            <person name="Madera M."/>
            <person name="Marchionni L."/>
            <person name="Matsuda H."/>
            <person name="Matsuzawa S."/>
            <person name="Miki H."/>
            <person name="Mignone F."/>
            <person name="Miyake S."/>
            <person name="Morris K."/>
            <person name="Mottagui-Tabar S."/>
            <person name="Mulder N."/>
            <person name="Nakano N."/>
            <person name="Nakauchi H."/>
            <person name="Ng P."/>
            <person name="Nilsson R."/>
            <person name="Nishiguchi S."/>
            <person name="Nishikawa S."/>
            <person name="Nori F."/>
            <person name="Ohara O."/>
            <person name="Okazaki Y."/>
            <person name="Orlando V."/>
            <person name="Pang K.C."/>
            <person name="Pavan W.J."/>
            <person name="Pavesi G."/>
            <person name="Pesole G."/>
            <person name="Petrovsky N."/>
            <person name="Piazza S."/>
            <person name="Reed J."/>
            <person name="Reid J.F."/>
            <person name="Ring B.Z."/>
            <person name="Ringwald M."/>
            <person name="Rost B."/>
            <person name="Ruan Y."/>
            <person name="Salzberg S.L."/>
            <person name="Sandelin A."/>
            <person name="Schneider C."/>
            <person name="Schoenbach C."/>
            <person name="Sekiguchi K."/>
            <person name="Semple C.A."/>
            <person name="Seno S."/>
            <person name="Sessa L."/>
            <person name="Sheng Y."/>
            <person name="Shibata Y."/>
            <person name="Shimada H."/>
            <person name="Shimada K."/>
            <person name="Silva D."/>
            <person name="Sinclair B."/>
            <person name="Sperling S."/>
            <person name="Stupka E."/>
            <person name="Sugiura K."/>
            <person name="Sultana R."/>
            <person name="Takenaka Y."/>
            <person name="Taki K."/>
            <person name="Tammoja K."/>
            <person name="Tan S.L."/>
            <person name="Tang S."/>
            <person name="Taylor M.S."/>
            <person name="Tegner J."/>
            <person name="Teichmann S.A."/>
            <person name="Ueda H.R."/>
            <person name="van Nimwegen E."/>
            <person name="Verardo R."/>
            <person name="Wei C.L."/>
            <person name="Yagi K."/>
            <person name="Yamanishi H."/>
            <person name="Zabarovsky E."/>
            <person name="Zhu S."/>
            <person name="Zimmer A."/>
            <person name="Hide W."/>
            <person name="Bult C."/>
            <person name="Grimmond S.M."/>
            <person name="Teasdale R.D."/>
            <person name="Liu E.T."/>
            <person name="Brusic V."/>
            <person name="Quackenbush J."/>
            <person name="Wahlestedt C."/>
            <person name="Mattick J.S."/>
            <person name="Hume D.A."/>
            <person name="Kai C."/>
            <person name="Sasaki D."/>
            <person name="Tomaru Y."/>
            <person name="Fukuda S."/>
            <person name="Kanamori-Katayama M."/>
            <person name="Suzuki M."/>
            <person name="Aoki J."/>
            <person name="Arakawa T."/>
            <person name="Iida J."/>
            <person name="Imamura K."/>
            <person name="Itoh M."/>
            <person name="Kato T."/>
            <person name="Kawaji H."/>
            <person name="Kawagashira N."/>
            <person name="Kawashima T."/>
            <person name="Kojima M."/>
            <person name="Kondo S."/>
            <person name="Konno H."/>
            <person name="Nakano K."/>
            <person name="Ninomiya N."/>
            <person name="Nishio T."/>
            <person name="Okada M."/>
            <person name="Plessy C."/>
            <person name="Shibata K."/>
            <person name="Shiraki T."/>
            <person name="Suzuki S."/>
            <person name="Tagami M."/>
            <person name="Waki K."/>
            <person name="Watahiki A."/>
            <person name="Okamura-Oho Y."/>
            <person name="Suzuki H."/>
            <person name="Kawai J."/>
            <person name="Hayashizaki Y."/>
        </authorList>
    </citation>
    <scope>NUCLEOTIDE SEQUENCE [LARGE SCALE MRNA]</scope>
    <source>
        <strain>C57BL/6J</strain>
        <tissue>Cerebellum</tissue>
    </source>
</reference>
<reference key="3">
    <citation type="journal article" date="2004" name="Genome Res.">
        <title>The status, quality, and expansion of the NIH full-length cDNA project: the Mammalian Gene Collection (MGC).</title>
        <authorList>
            <consortium name="The MGC Project Team"/>
        </authorList>
    </citation>
    <scope>NUCLEOTIDE SEQUENCE [LARGE SCALE MRNA]</scope>
    <source>
        <strain>FVB/N</strain>
        <tissue>Kidney</tissue>
    </source>
</reference>
<reference key="4">
    <citation type="journal article" date="2010" name="Cell">
        <title>A tissue-specific atlas of mouse protein phosphorylation and expression.</title>
        <authorList>
            <person name="Huttlin E.L."/>
            <person name="Jedrychowski M.P."/>
            <person name="Elias J.E."/>
            <person name="Goswami T."/>
            <person name="Rad R."/>
            <person name="Beausoleil S.A."/>
            <person name="Villen J."/>
            <person name="Haas W."/>
            <person name="Sowa M.E."/>
            <person name="Gygi S.P."/>
        </authorList>
    </citation>
    <scope>IDENTIFICATION BY MASS SPECTROMETRY [LARGE SCALE ANALYSIS]</scope>
    <source>
        <tissue>Kidney</tissue>
        <tissue>Liver</tissue>
        <tissue>Lung</tissue>
        <tissue>Spleen</tissue>
        <tissue>Testis</tissue>
    </source>
</reference>
<reference key="5">
    <citation type="journal article" date="2010" name="J. Biol. Chem.">
        <title>The structure of the mammalian RNase H2 complex provides insight into RNA.NA hybrid processing to prevent immune dysfunction.</title>
        <authorList>
            <person name="Shaban N.M."/>
            <person name="Harvey S."/>
            <person name="Perrino F.W."/>
            <person name="Hollis T."/>
        </authorList>
    </citation>
    <scope>X-RAY CRYSTALLOGRAPHY (2.9 ANGSTROMS)</scope>
    <scope>FUNCTION</scope>
    <scope>SUBUNIT</scope>
</reference>
<organism>
    <name type="scientific">Mus musculus</name>
    <name type="common">Mouse</name>
    <dbReference type="NCBI Taxonomy" id="10090"/>
    <lineage>
        <taxon>Eukaryota</taxon>
        <taxon>Metazoa</taxon>
        <taxon>Chordata</taxon>
        <taxon>Craniata</taxon>
        <taxon>Vertebrata</taxon>
        <taxon>Euteleostomi</taxon>
        <taxon>Mammalia</taxon>
        <taxon>Eutheria</taxon>
        <taxon>Euarchontoglires</taxon>
        <taxon>Glires</taxon>
        <taxon>Rodentia</taxon>
        <taxon>Myomorpha</taxon>
        <taxon>Muroidea</taxon>
        <taxon>Muridae</taxon>
        <taxon>Murinae</taxon>
        <taxon>Mus</taxon>
        <taxon>Mus</taxon>
    </lineage>
</organism>
<name>RNH2C_MOUSE</name>
<protein>
    <recommendedName>
        <fullName>Ribonuclease H2 subunit C</fullName>
        <shortName>RNase H2 subunit C</shortName>
    </recommendedName>
    <alternativeName>
        <fullName>Ribonuclease HI subunit C</fullName>
    </alternativeName>
</protein>
<comment type="function">
    <text evidence="3">Non catalytic subunit of RNase H2, an endonuclease that specifically degrades the RNA of RNA:DNA hybrids. Participates in DNA replication, possibly by mediating the removal of lagging-strand Okazaki fragment RNA primers during DNA replication. Mediates the excision of single ribonucleotides from DNA:RNA duplexes.</text>
</comment>
<comment type="subunit">
    <text evidence="3">The RNase H2 complex is a heterotrimer composed of the catalytic subunit RNASEH2A and the non-catalytic subunits RNASEH2B and RNASEH2C.</text>
</comment>
<comment type="subcellular location">
    <subcellularLocation>
        <location evidence="1">Nucleus</location>
    </subcellularLocation>
</comment>
<comment type="similarity">
    <text evidence="4">Belongs to the RNase H2 subunit C family.</text>
</comment>
<dbReference type="EMBL" id="AF346604">
    <property type="protein sequence ID" value="AAO49175.1"/>
    <property type="molecule type" value="mRNA"/>
</dbReference>
<dbReference type="EMBL" id="AK018776">
    <property type="protein sequence ID" value="BAB31401.1"/>
    <property type="molecule type" value="mRNA"/>
</dbReference>
<dbReference type="EMBL" id="AK011556">
    <property type="protein sequence ID" value="BAB27694.1"/>
    <property type="molecule type" value="mRNA"/>
</dbReference>
<dbReference type="EMBL" id="BC024333">
    <property type="protein sequence ID" value="AAH24333.1"/>
    <property type="molecule type" value="mRNA"/>
</dbReference>
<dbReference type="CCDS" id="CCDS29471.1"/>
<dbReference type="RefSeq" id="NP_080892.1">
    <property type="nucleotide sequence ID" value="NM_026616.2"/>
</dbReference>
<dbReference type="PDB" id="3KIO">
    <property type="method" value="X-ray"/>
    <property type="resolution" value="2.90 A"/>
    <property type="chains" value="C=1-166"/>
</dbReference>
<dbReference type="PDB" id="3P5J">
    <property type="method" value="X-ray"/>
    <property type="resolution" value="2.90 A"/>
    <property type="chains" value="C=1-166"/>
</dbReference>
<dbReference type="PDBsum" id="3KIO"/>
<dbReference type="PDBsum" id="3P5J"/>
<dbReference type="SMR" id="Q9CQ18"/>
<dbReference type="BioGRID" id="212732">
    <property type="interactions" value="2"/>
</dbReference>
<dbReference type="ComplexPortal" id="CPX-2875">
    <property type="entry name" value="RNase H2 complex"/>
</dbReference>
<dbReference type="FunCoup" id="Q9CQ18">
    <property type="interactions" value="87"/>
</dbReference>
<dbReference type="STRING" id="10090.ENSMUSP00000025864"/>
<dbReference type="iPTMnet" id="Q9CQ18"/>
<dbReference type="PhosphoSitePlus" id="Q9CQ18"/>
<dbReference type="PaxDb" id="10090-ENSMUSP00000025864"/>
<dbReference type="PeptideAtlas" id="Q9CQ18"/>
<dbReference type="ProteomicsDB" id="300507"/>
<dbReference type="Pumba" id="Q9CQ18"/>
<dbReference type="Antibodypedia" id="44295">
    <property type="antibodies" value="136 antibodies from 24 providers"/>
</dbReference>
<dbReference type="DNASU" id="68209"/>
<dbReference type="Ensembl" id="ENSMUST00000025864.11">
    <property type="protein sequence ID" value="ENSMUSP00000025864.5"/>
    <property type="gene ID" value="ENSMUSG00000024925.12"/>
</dbReference>
<dbReference type="GeneID" id="68209"/>
<dbReference type="KEGG" id="mmu:68209"/>
<dbReference type="UCSC" id="uc008gdx.1">
    <property type="organism name" value="mouse"/>
</dbReference>
<dbReference type="AGR" id="MGI:1915459"/>
<dbReference type="CTD" id="84153"/>
<dbReference type="MGI" id="MGI:1915459">
    <property type="gene designation" value="Rnaseh2c"/>
</dbReference>
<dbReference type="VEuPathDB" id="HostDB:ENSMUSG00000024925"/>
<dbReference type="eggNOG" id="ENOG502SBKV">
    <property type="taxonomic scope" value="Eukaryota"/>
</dbReference>
<dbReference type="GeneTree" id="ENSGT00390000001568"/>
<dbReference type="HOGENOM" id="CLU_097632_3_0_1"/>
<dbReference type="InParanoid" id="Q9CQ18"/>
<dbReference type="OMA" id="FDQFIGA"/>
<dbReference type="OrthoDB" id="67055at9989"/>
<dbReference type="PhylomeDB" id="Q9CQ18"/>
<dbReference type="TreeFam" id="TF324370"/>
<dbReference type="BioGRID-ORCS" id="68209">
    <property type="hits" value="23 hits in 78 CRISPR screens"/>
</dbReference>
<dbReference type="ChiTaRS" id="Rnaseh2c">
    <property type="organism name" value="mouse"/>
</dbReference>
<dbReference type="EvolutionaryTrace" id="Q9CQ18"/>
<dbReference type="PRO" id="PR:Q9CQ18"/>
<dbReference type="Proteomes" id="UP000000589">
    <property type="component" value="Chromosome 19"/>
</dbReference>
<dbReference type="RNAct" id="Q9CQ18">
    <property type="molecule type" value="protein"/>
</dbReference>
<dbReference type="Bgee" id="ENSMUSG00000024925">
    <property type="expression patterns" value="Expressed in internal carotid artery and 263 other cell types or tissues"/>
</dbReference>
<dbReference type="ExpressionAtlas" id="Q9CQ18">
    <property type="expression patterns" value="baseline and differential"/>
</dbReference>
<dbReference type="GO" id="GO:0005634">
    <property type="term" value="C:nucleus"/>
    <property type="evidence" value="ECO:0007669"/>
    <property type="project" value="UniProtKB-SubCell"/>
</dbReference>
<dbReference type="GO" id="GO:0032299">
    <property type="term" value="C:ribonuclease H2 complex"/>
    <property type="evidence" value="ECO:0000314"/>
    <property type="project" value="MGI"/>
</dbReference>
<dbReference type="GO" id="GO:0006298">
    <property type="term" value="P:mismatch repair"/>
    <property type="evidence" value="ECO:0000303"/>
    <property type="project" value="ComplexPortal"/>
</dbReference>
<dbReference type="GO" id="GO:0006401">
    <property type="term" value="P:RNA catabolic process"/>
    <property type="evidence" value="ECO:0000250"/>
    <property type="project" value="UniProtKB"/>
</dbReference>
<dbReference type="CDD" id="cd09271">
    <property type="entry name" value="RNase_H2-C"/>
    <property type="match status" value="1"/>
</dbReference>
<dbReference type="Gene3D" id="2.40.128.680">
    <property type="match status" value="1"/>
</dbReference>
<dbReference type="InterPro" id="IPR052863">
    <property type="entry name" value="RNase_H2_subunit_C"/>
</dbReference>
<dbReference type="InterPro" id="IPR013924">
    <property type="entry name" value="RNase_H2_suC"/>
</dbReference>
<dbReference type="PANTHER" id="PTHR47063">
    <property type="entry name" value="RIBONUCLEASE H2 SUBUNIT C"/>
    <property type="match status" value="1"/>
</dbReference>
<dbReference type="PANTHER" id="PTHR47063:SF1">
    <property type="entry name" value="RIBONUCLEASE H2 SUBUNIT C"/>
    <property type="match status" value="1"/>
</dbReference>
<dbReference type="Pfam" id="PF08615">
    <property type="entry name" value="RNase_H2_suC"/>
    <property type="match status" value="1"/>
</dbReference>
<evidence type="ECO:0000250" key="1"/>
<evidence type="ECO:0000250" key="2">
    <source>
        <dbReference type="UniProtKB" id="Q8TDP1"/>
    </source>
</evidence>
<evidence type="ECO:0000269" key="3">
    <source>
    </source>
</evidence>
<evidence type="ECO:0000305" key="4"/>
<evidence type="ECO:0007829" key="5">
    <source>
        <dbReference type="PDB" id="3KIO"/>
    </source>
</evidence>
<evidence type="ECO:0007829" key="6">
    <source>
        <dbReference type="PDB" id="3P5J"/>
    </source>
</evidence>
<sequence length="166" mass="17823">MKNPEEAADGKQRIHLRPGSLRGAAPAKLHLLPCDVLVSRPAPVDRFFTPAVRHDADGLQASFRGRGLRGEEVAVPPGFAGFVMVTEEKGEGLIGKLNFSGDAEDKADEAQEPLERDFDRLIGATGSFSHFTLWGLETVPGPDAKVHRALGWPSLAAAIHAQVPED</sequence>
<feature type="chain" id="PRO_0000248386" description="Ribonuclease H2 subunit C">
    <location>
        <begin position="1"/>
        <end position="166"/>
    </location>
</feature>
<feature type="modified residue" description="N-acetylmethionine" evidence="2">
    <location>
        <position position="1"/>
    </location>
</feature>
<feature type="sequence conflict" description="In Ref. 3; AAH24333." evidence="4" ref="3">
    <original>D</original>
    <variation>E</variation>
    <location>
        <position position="9"/>
    </location>
</feature>
<feature type="strand" evidence="5">
    <location>
        <begin position="14"/>
        <end position="16"/>
    </location>
</feature>
<feature type="turn" evidence="5">
    <location>
        <begin position="18"/>
        <end position="23"/>
    </location>
</feature>
<feature type="strand" evidence="5">
    <location>
        <begin position="29"/>
        <end position="38"/>
    </location>
</feature>
<feature type="helix" evidence="5">
    <location>
        <begin position="44"/>
        <end position="47"/>
    </location>
</feature>
<feature type="helix" evidence="5">
    <location>
        <begin position="49"/>
        <end position="51"/>
    </location>
</feature>
<feature type="strand" evidence="5">
    <location>
        <begin position="56"/>
        <end position="58"/>
    </location>
</feature>
<feature type="strand" evidence="5">
    <location>
        <begin position="60"/>
        <end position="63"/>
    </location>
</feature>
<feature type="strand" evidence="5">
    <location>
        <begin position="66"/>
        <end position="74"/>
    </location>
</feature>
<feature type="strand" evidence="5">
    <location>
        <begin position="79"/>
        <end position="86"/>
    </location>
</feature>
<feature type="turn" evidence="5">
    <location>
        <begin position="87"/>
        <end position="89"/>
    </location>
</feature>
<feature type="strand" evidence="5">
    <location>
        <begin position="92"/>
        <end position="106"/>
    </location>
</feature>
<feature type="helix" evidence="5">
    <location>
        <begin position="113"/>
        <end position="115"/>
    </location>
</feature>
<feature type="strand" evidence="6">
    <location>
        <begin position="123"/>
        <end position="138"/>
    </location>
</feature>
<feature type="helix" evidence="6">
    <location>
        <begin position="145"/>
        <end position="149"/>
    </location>
</feature>
<feature type="helix" evidence="6">
    <location>
        <begin position="152"/>
        <end position="159"/>
    </location>
</feature>
<gene>
    <name type="primary">Rnaseh2c</name>
    <name type="synonym">Ayp1</name>
</gene>